<name>MURD_FUSNN</name>
<protein>
    <recommendedName>
        <fullName evidence="1">UDP-N-acetylmuramoylalanine--D-glutamate ligase</fullName>
        <ecNumber evidence="1">6.3.2.9</ecNumber>
    </recommendedName>
    <alternativeName>
        <fullName evidence="1">D-glutamic acid-adding enzyme</fullName>
    </alternativeName>
    <alternativeName>
        <fullName evidence="1">UDP-N-acetylmuramoyl-L-alanyl-D-glutamate synthetase</fullName>
    </alternativeName>
</protein>
<accession>Q8RDQ1</accession>
<dbReference type="EC" id="6.3.2.9" evidence="1"/>
<dbReference type="EMBL" id="AE009951">
    <property type="protein sequence ID" value="AAL95651.1"/>
    <property type="status" value="ALT_INIT"/>
    <property type="molecule type" value="Genomic_DNA"/>
</dbReference>
<dbReference type="RefSeq" id="NP_604352.1">
    <property type="nucleotide sequence ID" value="NC_003454.1"/>
</dbReference>
<dbReference type="RefSeq" id="WP_029597345.1">
    <property type="nucleotide sequence ID" value="NZ_OZ209243.1"/>
</dbReference>
<dbReference type="SMR" id="Q8RDQ1"/>
<dbReference type="FunCoup" id="Q8RDQ1">
    <property type="interactions" value="319"/>
</dbReference>
<dbReference type="STRING" id="190304.FN1458"/>
<dbReference type="PaxDb" id="190304-FN1458"/>
<dbReference type="EnsemblBacteria" id="AAL95651">
    <property type="protein sequence ID" value="AAL95651"/>
    <property type="gene ID" value="FN1458"/>
</dbReference>
<dbReference type="GeneID" id="79784421"/>
<dbReference type="KEGG" id="fnu:FN1458"/>
<dbReference type="PATRIC" id="fig|190304.8.peg.2018"/>
<dbReference type="eggNOG" id="COG0771">
    <property type="taxonomic scope" value="Bacteria"/>
</dbReference>
<dbReference type="HOGENOM" id="CLU_032540_0_0_0"/>
<dbReference type="InParanoid" id="Q8RDQ1"/>
<dbReference type="UniPathway" id="UPA00219"/>
<dbReference type="Proteomes" id="UP000002521">
    <property type="component" value="Chromosome"/>
</dbReference>
<dbReference type="GO" id="GO:0005737">
    <property type="term" value="C:cytoplasm"/>
    <property type="evidence" value="ECO:0007669"/>
    <property type="project" value="UniProtKB-SubCell"/>
</dbReference>
<dbReference type="GO" id="GO:0005524">
    <property type="term" value="F:ATP binding"/>
    <property type="evidence" value="ECO:0007669"/>
    <property type="project" value="UniProtKB-UniRule"/>
</dbReference>
<dbReference type="GO" id="GO:0008764">
    <property type="term" value="F:UDP-N-acetylmuramoylalanine-D-glutamate ligase activity"/>
    <property type="evidence" value="ECO:0007669"/>
    <property type="project" value="UniProtKB-UniRule"/>
</dbReference>
<dbReference type="GO" id="GO:0051301">
    <property type="term" value="P:cell division"/>
    <property type="evidence" value="ECO:0007669"/>
    <property type="project" value="UniProtKB-KW"/>
</dbReference>
<dbReference type="GO" id="GO:0071555">
    <property type="term" value="P:cell wall organization"/>
    <property type="evidence" value="ECO:0007669"/>
    <property type="project" value="UniProtKB-KW"/>
</dbReference>
<dbReference type="GO" id="GO:0009252">
    <property type="term" value="P:peptidoglycan biosynthetic process"/>
    <property type="evidence" value="ECO:0007669"/>
    <property type="project" value="UniProtKB-UniRule"/>
</dbReference>
<dbReference type="GO" id="GO:0008360">
    <property type="term" value="P:regulation of cell shape"/>
    <property type="evidence" value="ECO:0007669"/>
    <property type="project" value="UniProtKB-KW"/>
</dbReference>
<dbReference type="Gene3D" id="3.90.190.20">
    <property type="entry name" value="Mur ligase, C-terminal domain"/>
    <property type="match status" value="1"/>
</dbReference>
<dbReference type="Gene3D" id="3.40.1190.10">
    <property type="entry name" value="Mur-like, catalytic domain"/>
    <property type="match status" value="1"/>
</dbReference>
<dbReference type="Gene3D" id="3.40.50.720">
    <property type="entry name" value="NAD(P)-binding Rossmann-like Domain"/>
    <property type="match status" value="1"/>
</dbReference>
<dbReference type="HAMAP" id="MF_00639">
    <property type="entry name" value="MurD"/>
    <property type="match status" value="1"/>
</dbReference>
<dbReference type="InterPro" id="IPR036565">
    <property type="entry name" value="Mur-like_cat_sf"/>
</dbReference>
<dbReference type="InterPro" id="IPR036615">
    <property type="entry name" value="Mur_ligase_C_dom_sf"/>
</dbReference>
<dbReference type="InterPro" id="IPR013221">
    <property type="entry name" value="Mur_ligase_cen"/>
</dbReference>
<dbReference type="InterPro" id="IPR005762">
    <property type="entry name" value="MurD"/>
</dbReference>
<dbReference type="NCBIfam" id="TIGR01087">
    <property type="entry name" value="murD"/>
    <property type="match status" value="1"/>
</dbReference>
<dbReference type="PANTHER" id="PTHR43692">
    <property type="entry name" value="UDP-N-ACETYLMURAMOYLALANINE--D-GLUTAMATE LIGASE"/>
    <property type="match status" value="1"/>
</dbReference>
<dbReference type="PANTHER" id="PTHR43692:SF1">
    <property type="entry name" value="UDP-N-ACETYLMURAMOYLALANINE--D-GLUTAMATE LIGASE"/>
    <property type="match status" value="1"/>
</dbReference>
<dbReference type="Pfam" id="PF08245">
    <property type="entry name" value="Mur_ligase_M"/>
    <property type="match status" value="1"/>
</dbReference>
<dbReference type="SUPFAM" id="SSF51984">
    <property type="entry name" value="MurCD N-terminal domain"/>
    <property type="match status" value="1"/>
</dbReference>
<dbReference type="SUPFAM" id="SSF53623">
    <property type="entry name" value="MurD-like peptide ligases, catalytic domain"/>
    <property type="match status" value="1"/>
</dbReference>
<dbReference type="SUPFAM" id="SSF53244">
    <property type="entry name" value="MurD-like peptide ligases, peptide-binding domain"/>
    <property type="match status" value="1"/>
</dbReference>
<keyword id="KW-0067">ATP-binding</keyword>
<keyword id="KW-0131">Cell cycle</keyword>
<keyword id="KW-0132">Cell division</keyword>
<keyword id="KW-0133">Cell shape</keyword>
<keyword id="KW-0961">Cell wall biogenesis/degradation</keyword>
<keyword id="KW-0963">Cytoplasm</keyword>
<keyword id="KW-0436">Ligase</keyword>
<keyword id="KW-0547">Nucleotide-binding</keyword>
<keyword id="KW-0573">Peptidoglycan synthesis</keyword>
<keyword id="KW-1185">Reference proteome</keyword>
<feature type="chain" id="PRO_0000109017" description="UDP-N-acetylmuramoylalanine--D-glutamate ligase">
    <location>
        <begin position="1"/>
        <end position="432"/>
    </location>
</feature>
<feature type="binding site" evidence="1">
    <location>
        <begin position="98"/>
        <end position="104"/>
    </location>
    <ligand>
        <name>ATP</name>
        <dbReference type="ChEBI" id="CHEBI:30616"/>
    </ligand>
</feature>
<sequence length="432" mass="49390">MKKAMIYGLGISGTGAKELLEKEGYKIIVVDDKKAMTSEEALNHLEGLEFFIKSPGIPYNDFVKEVQKRGIKILDEIEIAYNYMIEKGLKTKIIAITGTNGKSTTTAKISDMLNHAGYKATYAGNIGRSLSEVLLKEKDLDFISLELSSFQLENIENFKPCISMIINIGPDHIERYKSFDEYYNTKFNITKNQTEDLYFIENIDDEEIEKRAKQIKAKRISVSKFKKADIFVENDKIYHDKDDIIDVDKLSLKGIHNLENTLFMVATAEILKLDREKLKEFLMIATPLEHRTELFFNYGKLKFINDSKATNVDSTKFAIQANKNSILICGGYDKGVDLAPLAEMIKENIKEVYLIGVIADKIENELKKVGYEDNKIHKLVNIENSLQDMRKRFTKDSDEVILLSPATSSYDQFNSFEHRGKVFKELVLKIFG</sequence>
<reference key="1">
    <citation type="journal article" date="2002" name="J. Bacteriol.">
        <title>Genome sequence and analysis of the oral bacterium Fusobacterium nucleatum strain ATCC 25586.</title>
        <authorList>
            <person name="Kapatral V."/>
            <person name="Anderson I."/>
            <person name="Ivanova N."/>
            <person name="Reznik G."/>
            <person name="Los T."/>
            <person name="Lykidis A."/>
            <person name="Bhattacharyya A."/>
            <person name="Bartman A."/>
            <person name="Gardner W."/>
            <person name="Grechkin G."/>
            <person name="Zhu L."/>
            <person name="Vasieva O."/>
            <person name="Chu L."/>
            <person name="Kogan Y."/>
            <person name="Chaga O."/>
            <person name="Goltsman E."/>
            <person name="Bernal A."/>
            <person name="Larsen N."/>
            <person name="D'Souza M."/>
            <person name="Walunas T."/>
            <person name="Pusch G."/>
            <person name="Haselkorn R."/>
            <person name="Fonstein M."/>
            <person name="Kyrpides N.C."/>
            <person name="Overbeek R."/>
        </authorList>
    </citation>
    <scope>NUCLEOTIDE SEQUENCE [LARGE SCALE GENOMIC DNA]</scope>
    <source>
        <strain>ATCC 25586 / DSM 15643 / BCRC 10681 / CIP 101130 / JCM 8532 / KCTC 2640 / LMG 13131 / VPI 4355</strain>
    </source>
</reference>
<evidence type="ECO:0000255" key="1">
    <source>
        <dbReference type="HAMAP-Rule" id="MF_00639"/>
    </source>
</evidence>
<evidence type="ECO:0000305" key="2"/>
<gene>
    <name evidence="1" type="primary">murD</name>
    <name type="ordered locus">FN1458</name>
</gene>
<comment type="function">
    <text evidence="1">Cell wall formation. Catalyzes the addition of glutamate to the nucleotide precursor UDP-N-acetylmuramoyl-L-alanine (UMA).</text>
</comment>
<comment type="catalytic activity">
    <reaction evidence="1">
        <text>UDP-N-acetyl-alpha-D-muramoyl-L-alanine + D-glutamate + ATP = UDP-N-acetyl-alpha-D-muramoyl-L-alanyl-D-glutamate + ADP + phosphate + H(+)</text>
        <dbReference type="Rhea" id="RHEA:16429"/>
        <dbReference type="ChEBI" id="CHEBI:15378"/>
        <dbReference type="ChEBI" id="CHEBI:29986"/>
        <dbReference type="ChEBI" id="CHEBI:30616"/>
        <dbReference type="ChEBI" id="CHEBI:43474"/>
        <dbReference type="ChEBI" id="CHEBI:83898"/>
        <dbReference type="ChEBI" id="CHEBI:83900"/>
        <dbReference type="ChEBI" id="CHEBI:456216"/>
        <dbReference type="EC" id="6.3.2.9"/>
    </reaction>
</comment>
<comment type="pathway">
    <text evidence="1">Cell wall biogenesis; peptidoglycan biosynthesis.</text>
</comment>
<comment type="subcellular location">
    <subcellularLocation>
        <location evidence="1">Cytoplasm</location>
    </subcellularLocation>
</comment>
<comment type="similarity">
    <text evidence="1">Belongs to the MurCDEF family.</text>
</comment>
<comment type="sequence caution" evidence="2">
    <conflict type="erroneous initiation">
        <sequence resource="EMBL-CDS" id="AAL95651"/>
    </conflict>
</comment>
<organism>
    <name type="scientific">Fusobacterium nucleatum subsp. nucleatum (strain ATCC 25586 / DSM 15643 / BCRC 10681 / CIP 101130 / JCM 8532 / KCTC 2640 / LMG 13131 / VPI 4355)</name>
    <dbReference type="NCBI Taxonomy" id="190304"/>
    <lineage>
        <taxon>Bacteria</taxon>
        <taxon>Fusobacteriati</taxon>
        <taxon>Fusobacteriota</taxon>
        <taxon>Fusobacteriia</taxon>
        <taxon>Fusobacteriales</taxon>
        <taxon>Fusobacteriaceae</taxon>
        <taxon>Fusobacterium</taxon>
    </lineage>
</organism>
<proteinExistence type="inferred from homology"/>